<sequence>MKLTPRQQEILDFIKSTLEVLGAPPTRMEISSAFGFASPNAAEDHLKALAKKGAIVLEPGSARGIRLVEQLGLPLIGSVAAGSPILAVENMQGRYALDASLFAPKADFLLKVRGLSMIDVGIFDGDLLAVHKTNQARDGQIVVARLDEEVTVKRLERSGGQIRLIAENPDFEPIIVDPEAVDFAIEGIAVGLIRGAVSKLS</sequence>
<keyword id="KW-0068">Autocatalytic cleavage</keyword>
<keyword id="KW-0227">DNA damage</keyword>
<keyword id="KW-0234">DNA repair</keyword>
<keyword id="KW-0235">DNA replication</keyword>
<keyword id="KW-0238">DNA-binding</keyword>
<keyword id="KW-0378">Hydrolase</keyword>
<keyword id="KW-0678">Repressor</keyword>
<keyword id="KW-0742">SOS response</keyword>
<keyword id="KW-0804">Transcription</keyword>
<keyword id="KW-0805">Transcription regulation</keyword>
<proteinExistence type="inferred from homology"/>
<organism>
    <name type="scientific">Dechloromonas aromatica (strain RCB)</name>
    <dbReference type="NCBI Taxonomy" id="159087"/>
    <lineage>
        <taxon>Bacteria</taxon>
        <taxon>Pseudomonadati</taxon>
        <taxon>Pseudomonadota</taxon>
        <taxon>Betaproteobacteria</taxon>
        <taxon>Rhodocyclales</taxon>
        <taxon>Azonexaceae</taxon>
        <taxon>Dechloromonas</taxon>
    </lineage>
</organism>
<name>LEXA_DECAR</name>
<comment type="function">
    <text evidence="1">Represses a number of genes involved in the response to DNA damage (SOS response), including recA and lexA. In the presence of single-stranded DNA, RecA interacts with LexA causing an autocatalytic cleavage which disrupts the DNA-binding part of LexA, leading to derepression of the SOS regulon and eventually DNA repair.</text>
</comment>
<comment type="catalytic activity">
    <reaction evidence="1">
        <text>Hydrolysis of Ala-|-Gly bond in repressor LexA.</text>
        <dbReference type="EC" id="3.4.21.88"/>
    </reaction>
</comment>
<comment type="subunit">
    <text evidence="1">Homodimer.</text>
</comment>
<comment type="similarity">
    <text evidence="1">Belongs to the peptidase S24 family.</text>
</comment>
<evidence type="ECO:0000255" key="1">
    <source>
        <dbReference type="HAMAP-Rule" id="MF_00015"/>
    </source>
</evidence>
<protein>
    <recommendedName>
        <fullName evidence="1">LexA repressor</fullName>
        <ecNumber evidence="1">3.4.21.88</ecNumber>
    </recommendedName>
</protein>
<gene>
    <name evidence="1" type="primary">lexA</name>
    <name type="ordered locus">Daro_1939</name>
</gene>
<feature type="chain" id="PRO_0000322729" description="LexA repressor">
    <location>
        <begin position="1"/>
        <end position="201"/>
    </location>
</feature>
<feature type="DNA-binding region" description="H-T-H motif" evidence="1">
    <location>
        <begin position="27"/>
        <end position="47"/>
    </location>
</feature>
<feature type="active site" description="For autocatalytic cleavage activity" evidence="1">
    <location>
        <position position="116"/>
    </location>
</feature>
<feature type="active site" description="For autocatalytic cleavage activity" evidence="1">
    <location>
        <position position="153"/>
    </location>
</feature>
<feature type="site" description="Cleavage; by autolysis" evidence="1">
    <location>
        <begin position="81"/>
        <end position="82"/>
    </location>
</feature>
<accession>Q47EP6</accession>
<reference key="1">
    <citation type="journal article" date="2009" name="BMC Genomics">
        <title>Metabolic analysis of the soil microbe Dechloromonas aromatica str. RCB: indications of a surprisingly complex life-style and cryptic anaerobic pathways for aromatic degradation.</title>
        <authorList>
            <person name="Salinero K.K."/>
            <person name="Keller K."/>
            <person name="Feil W.S."/>
            <person name="Feil H."/>
            <person name="Trong S."/>
            <person name="Di Bartolo G."/>
            <person name="Lapidus A."/>
        </authorList>
    </citation>
    <scope>NUCLEOTIDE SEQUENCE [LARGE SCALE GENOMIC DNA]</scope>
    <source>
        <strain>RCB</strain>
    </source>
</reference>
<dbReference type="EC" id="3.4.21.88" evidence="1"/>
<dbReference type="EMBL" id="CP000089">
    <property type="protein sequence ID" value="AAZ46685.1"/>
    <property type="molecule type" value="Genomic_DNA"/>
</dbReference>
<dbReference type="SMR" id="Q47EP6"/>
<dbReference type="STRING" id="159087.Daro_1939"/>
<dbReference type="MEROPS" id="S24.001"/>
<dbReference type="KEGG" id="dar:Daro_1939"/>
<dbReference type="eggNOG" id="COG1974">
    <property type="taxonomic scope" value="Bacteria"/>
</dbReference>
<dbReference type="HOGENOM" id="CLU_066192_45_3_4"/>
<dbReference type="OrthoDB" id="9802364at2"/>
<dbReference type="GO" id="GO:0003677">
    <property type="term" value="F:DNA binding"/>
    <property type="evidence" value="ECO:0007669"/>
    <property type="project" value="UniProtKB-UniRule"/>
</dbReference>
<dbReference type="GO" id="GO:0004252">
    <property type="term" value="F:serine-type endopeptidase activity"/>
    <property type="evidence" value="ECO:0007669"/>
    <property type="project" value="UniProtKB-UniRule"/>
</dbReference>
<dbReference type="GO" id="GO:0006281">
    <property type="term" value="P:DNA repair"/>
    <property type="evidence" value="ECO:0007669"/>
    <property type="project" value="UniProtKB-UniRule"/>
</dbReference>
<dbReference type="GO" id="GO:0006260">
    <property type="term" value="P:DNA replication"/>
    <property type="evidence" value="ECO:0007669"/>
    <property type="project" value="UniProtKB-UniRule"/>
</dbReference>
<dbReference type="GO" id="GO:0045892">
    <property type="term" value="P:negative regulation of DNA-templated transcription"/>
    <property type="evidence" value="ECO:0007669"/>
    <property type="project" value="UniProtKB-UniRule"/>
</dbReference>
<dbReference type="GO" id="GO:0006508">
    <property type="term" value="P:proteolysis"/>
    <property type="evidence" value="ECO:0007669"/>
    <property type="project" value="InterPro"/>
</dbReference>
<dbReference type="GO" id="GO:0009432">
    <property type="term" value="P:SOS response"/>
    <property type="evidence" value="ECO:0007669"/>
    <property type="project" value="UniProtKB-UniRule"/>
</dbReference>
<dbReference type="CDD" id="cd06529">
    <property type="entry name" value="S24_LexA-like"/>
    <property type="match status" value="1"/>
</dbReference>
<dbReference type="FunFam" id="1.10.10.10:FF:000009">
    <property type="entry name" value="LexA repressor"/>
    <property type="match status" value="1"/>
</dbReference>
<dbReference type="FunFam" id="2.10.109.10:FF:000001">
    <property type="entry name" value="LexA repressor"/>
    <property type="match status" value="1"/>
</dbReference>
<dbReference type="Gene3D" id="2.10.109.10">
    <property type="entry name" value="Umud Fragment, subunit A"/>
    <property type="match status" value="1"/>
</dbReference>
<dbReference type="Gene3D" id="1.10.10.10">
    <property type="entry name" value="Winged helix-like DNA-binding domain superfamily/Winged helix DNA-binding domain"/>
    <property type="match status" value="1"/>
</dbReference>
<dbReference type="HAMAP" id="MF_00015">
    <property type="entry name" value="LexA"/>
    <property type="match status" value="1"/>
</dbReference>
<dbReference type="InterPro" id="IPR006200">
    <property type="entry name" value="LexA"/>
</dbReference>
<dbReference type="InterPro" id="IPR039418">
    <property type="entry name" value="LexA-like"/>
</dbReference>
<dbReference type="InterPro" id="IPR036286">
    <property type="entry name" value="LexA/Signal_pep-like_sf"/>
</dbReference>
<dbReference type="InterPro" id="IPR006199">
    <property type="entry name" value="LexA_DNA-bd_dom"/>
</dbReference>
<dbReference type="InterPro" id="IPR050077">
    <property type="entry name" value="LexA_repressor"/>
</dbReference>
<dbReference type="InterPro" id="IPR006197">
    <property type="entry name" value="Peptidase_S24_LexA"/>
</dbReference>
<dbReference type="InterPro" id="IPR015927">
    <property type="entry name" value="Peptidase_S24_S26A/B/C"/>
</dbReference>
<dbReference type="InterPro" id="IPR036388">
    <property type="entry name" value="WH-like_DNA-bd_sf"/>
</dbReference>
<dbReference type="InterPro" id="IPR036390">
    <property type="entry name" value="WH_DNA-bd_sf"/>
</dbReference>
<dbReference type="NCBIfam" id="TIGR00498">
    <property type="entry name" value="lexA"/>
    <property type="match status" value="1"/>
</dbReference>
<dbReference type="PANTHER" id="PTHR33516">
    <property type="entry name" value="LEXA REPRESSOR"/>
    <property type="match status" value="1"/>
</dbReference>
<dbReference type="PANTHER" id="PTHR33516:SF2">
    <property type="entry name" value="LEXA REPRESSOR-RELATED"/>
    <property type="match status" value="1"/>
</dbReference>
<dbReference type="Pfam" id="PF01726">
    <property type="entry name" value="LexA_DNA_bind"/>
    <property type="match status" value="1"/>
</dbReference>
<dbReference type="Pfam" id="PF00717">
    <property type="entry name" value="Peptidase_S24"/>
    <property type="match status" value="1"/>
</dbReference>
<dbReference type="PRINTS" id="PR00726">
    <property type="entry name" value="LEXASERPTASE"/>
</dbReference>
<dbReference type="SUPFAM" id="SSF51306">
    <property type="entry name" value="LexA/Signal peptidase"/>
    <property type="match status" value="1"/>
</dbReference>
<dbReference type="SUPFAM" id="SSF46785">
    <property type="entry name" value="Winged helix' DNA-binding domain"/>
    <property type="match status" value="1"/>
</dbReference>